<feature type="chain" id="PRO_0000185374" description="Ribosome biogenesis regulatory protein homolog">
    <location>
        <begin position="1"/>
        <end position="365"/>
    </location>
</feature>
<feature type="region of interest" description="Disordered" evidence="2">
    <location>
        <begin position="233"/>
        <end position="253"/>
    </location>
</feature>
<feature type="region of interest" description="Disordered" evidence="2">
    <location>
        <begin position="280"/>
        <end position="365"/>
    </location>
</feature>
<feature type="compositionally biased region" description="Basic and acidic residues" evidence="2">
    <location>
        <begin position="235"/>
        <end position="245"/>
    </location>
</feature>
<feature type="compositionally biased region" description="Basic residues" evidence="2">
    <location>
        <begin position="302"/>
        <end position="325"/>
    </location>
</feature>
<feature type="compositionally biased region" description="Gly residues" evidence="2">
    <location>
        <begin position="337"/>
        <end position="350"/>
    </location>
</feature>
<feature type="compositionally biased region" description="Basic residues" evidence="2">
    <location>
        <begin position="351"/>
        <end position="365"/>
    </location>
</feature>
<feature type="modified residue" description="N-acetylmethionine" evidence="6 8 9 10">
    <location>
        <position position="1"/>
    </location>
</feature>
<feature type="modified residue" description="Phosphoserine" evidence="11">
    <location>
        <position position="5"/>
    </location>
</feature>
<feature type="modified residue" description="Citrulline" evidence="1">
    <location>
        <position position="273"/>
    </location>
</feature>
<feature type="cross-link" description="Glycyl lysine isopeptide (Lys-Gly) (interchain with G-Cter in SUMO2)" evidence="12">
    <location>
        <position position="154"/>
    </location>
</feature>
<feature type="cross-link" description="Glycyl lysine isopeptide (Lys-Gly) (interchain with G-Cter in SUMO2)" evidence="12">
    <location>
        <position position="226"/>
    </location>
</feature>
<feature type="cross-link" description="Glycyl lysine isopeptide (Lys-Gly) (interchain with G-Cter in SUMO2)" evidence="12">
    <location>
        <position position="266"/>
    </location>
</feature>
<feature type="sequence variant" id="VAR_051887" description="In dbSNP:rs34077648.">
    <original>Q</original>
    <variation>H</variation>
    <location>
        <position position="116"/>
    </location>
</feature>
<feature type="sequence variant" id="VAR_051888" description="In dbSNP:rs3739335.">
    <original>K</original>
    <variation>R</variation>
    <location>
        <position position="126"/>
    </location>
</feature>
<feature type="sequence variant" id="VAR_020484" description="In dbSNP:rs3739336.">
    <original>R</original>
    <variation>L</variation>
    <location>
        <position position="191"/>
    </location>
</feature>
<accession>Q15050</accession>
<accession>Q9BUX8</accession>
<proteinExistence type="evidence at protein level"/>
<gene>
    <name type="primary">RRS1</name>
    <name type="synonym">KIAA0112</name>
    <name type="synonym">RRR</name>
</gene>
<evidence type="ECO:0000250" key="1">
    <source>
        <dbReference type="UniProtKB" id="Q9CYH6"/>
    </source>
</evidence>
<evidence type="ECO:0000256" key="2">
    <source>
        <dbReference type="SAM" id="MobiDB-lite"/>
    </source>
</evidence>
<evidence type="ECO:0000269" key="3">
    <source>
    </source>
</evidence>
<evidence type="ECO:0000269" key="4">
    <source>
    </source>
</evidence>
<evidence type="ECO:0000269" key="5">
    <source>
    </source>
</evidence>
<evidence type="ECO:0000269" key="6">
    <source ref="3"/>
</evidence>
<evidence type="ECO:0000305" key="7"/>
<evidence type="ECO:0007744" key="8">
    <source>
    </source>
</evidence>
<evidence type="ECO:0007744" key="9">
    <source>
    </source>
</evidence>
<evidence type="ECO:0007744" key="10">
    <source>
    </source>
</evidence>
<evidence type="ECO:0007744" key="11">
    <source>
    </source>
</evidence>
<evidence type="ECO:0007744" key="12">
    <source>
    </source>
</evidence>
<dbReference type="EMBL" id="D25218">
    <property type="protein sequence ID" value="BAA04948.1"/>
    <property type="status" value="ALT_INIT"/>
    <property type="molecule type" value="mRNA"/>
</dbReference>
<dbReference type="EMBL" id="BC001811">
    <property type="protein sequence ID" value="AAH01811.1"/>
    <property type="molecule type" value="mRNA"/>
</dbReference>
<dbReference type="EMBL" id="BC013043">
    <property type="protein sequence ID" value="AAH13043.1"/>
    <property type="molecule type" value="mRNA"/>
</dbReference>
<dbReference type="CCDS" id="CCDS6189.1"/>
<dbReference type="RefSeq" id="NP_055984.1">
    <property type="nucleotide sequence ID" value="NM_015169.4"/>
</dbReference>
<dbReference type="PDB" id="8FKP">
    <property type="method" value="EM"/>
    <property type="resolution" value="2.85 A"/>
    <property type="chains" value="ST=1-365"/>
</dbReference>
<dbReference type="PDB" id="8FKQ">
    <property type="method" value="EM"/>
    <property type="resolution" value="2.76 A"/>
    <property type="chains" value="ST=1-365"/>
</dbReference>
<dbReference type="PDB" id="8FKR">
    <property type="method" value="EM"/>
    <property type="resolution" value="2.89 A"/>
    <property type="chains" value="ST=1-365"/>
</dbReference>
<dbReference type="PDB" id="8FKS">
    <property type="method" value="EM"/>
    <property type="resolution" value="2.88 A"/>
    <property type="chains" value="ST=1-365"/>
</dbReference>
<dbReference type="PDB" id="8FKT">
    <property type="method" value="EM"/>
    <property type="resolution" value="2.81 A"/>
    <property type="chains" value="ST=1-365"/>
</dbReference>
<dbReference type="PDB" id="8FKU">
    <property type="method" value="EM"/>
    <property type="resolution" value="2.82 A"/>
    <property type="chains" value="ST=1-365"/>
</dbReference>
<dbReference type="PDB" id="8FKV">
    <property type="method" value="EM"/>
    <property type="resolution" value="2.47 A"/>
    <property type="chains" value="ST=1-365"/>
</dbReference>
<dbReference type="PDB" id="8FKW">
    <property type="method" value="EM"/>
    <property type="resolution" value="2.50 A"/>
    <property type="chains" value="ST=1-365"/>
</dbReference>
<dbReference type="PDB" id="8FKX">
    <property type="method" value="EM"/>
    <property type="resolution" value="2.59 A"/>
    <property type="chains" value="ST=1-365"/>
</dbReference>
<dbReference type="PDB" id="8FKY">
    <property type="method" value="EM"/>
    <property type="resolution" value="2.67 A"/>
    <property type="chains" value="ST=1-365"/>
</dbReference>
<dbReference type="PDB" id="8FL0">
    <property type="method" value="EM"/>
    <property type="resolution" value="2.91 A"/>
    <property type="chains" value="ST=1-365"/>
</dbReference>
<dbReference type="PDB" id="8IR1">
    <property type="method" value="EM"/>
    <property type="resolution" value="3.30 A"/>
    <property type="chains" value="R=1-365"/>
</dbReference>
<dbReference type="PDB" id="8IR3">
    <property type="method" value="EM"/>
    <property type="resolution" value="3.50 A"/>
    <property type="chains" value="R=1-365"/>
</dbReference>
<dbReference type="PDB" id="8RL2">
    <property type="method" value="EM"/>
    <property type="resolution" value="2.84 A"/>
    <property type="chains" value="CK=1-365"/>
</dbReference>
<dbReference type="PDBsum" id="8FKP"/>
<dbReference type="PDBsum" id="8FKQ"/>
<dbReference type="PDBsum" id="8FKR"/>
<dbReference type="PDBsum" id="8FKS"/>
<dbReference type="PDBsum" id="8FKT"/>
<dbReference type="PDBsum" id="8FKU"/>
<dbReference type="PDBsum" id="8FKV"/>
<dbReference type="PDBsum" id="8FKW"/>
<dbReference type="PDBsum" id="8FKX"/>
<dbReference type="PDBsum" id="8FKY"/>
<dbReference type="PDBsum" id="8FL0"/>
<dbReference type="PDBsum" id="8IR1"/>
<dbReference type="PDBsum" id="8IR3"/>
<dbReference type="PDBsum" id="8RL2"/>
<dbReference type="EMDB" id="EMD-19330"/>
<dbReference type="EMDB" id="EMD-29252"/>
<dbReference type="EMDB" id="EMD-29253"/>
<dbReference type="EMDB" id="EMD-29254"/>
<dbReference type="EMDB" id="EMD-29255"/>
<dbReference type="EMDB" id="EMD-29256"/>
<dbReference type="EMDB" id="EMD-29257"/>
<dbReference type="EMDB" id="EMD-29258"/>
<dbReference type="EMDB" id="EMD-29259"/>
<dbReference type="EMDB" id="EMD-29260"/>
<dbReference type="EMDB" id="EMD-29261"/>
<dbReference type="EMDB" id="EMD-29263"/>
<dbReference type="EMDB" id="EMD-35672"/>
<dbReference type="EMDB" id="EMD-35673"/>
<dbReference type="SMR" id="Q15050"/>
<dbReference type="BioGRID" id="116819">
    <property type="interactions" value="506"/>
</dbReference>
<dbReference type="FunCoup" id="Q15050">
    <property type="interactions" value="2132"/>
</dbReference>
<dbReference type="IntAct" id="Q15050">
    <property type="interactions" value="227"/>
</dbReference>
<dbReference type="MINT" id="Q15050"/>
<dbReference type="STRING" id="9606.ENSP00000322396"/>
<dbReference type="GlyGen" id="Q15050">
    <property type="glycosylation" value="4 sites, 1 O-linked glycan (3 sites)"/>
</dbReference>
<dbReference type="iPTMnet" id="Q15050"/>
<dbReference type="PhosphoSitePlus" id="Q15050"/>
<dbReference type="SwissPalm" id="Q15050"/>
<dbReference type="BioMuta" id="RRS1"/>
<dbReference type="DMDM" id="21431847"/>
<dbReference type="jPOST" id="Q15050"/>
<dbReference type="MassIVE" id="Q15050"/>
<dbReference type="PaxDb" id="9606-ENSP00000322396"/>
<dbReference type="PeptideAtlas" id="Q15050"/>
<dbReference type="ProteomicsDB" id="60402"/>
<dbReference type="Pumba" id="Q15050"/>
<dbReference type="TopDownProteomics" id="Q15050"/>
<dbReference type="Antibodypedia" id="24827">
    <property type="antibodies" value="195 antibodies from 28 providers"/>
</dbReference>
<dbReference type="DNASU" id="23212"/>
<dbReference type="Ensembl" id="ENST00000320270.4">
    <property type="protein sequence ID" value="ENSP00000322396.2"/>
    <property type="gene ID" value="ENSG00000179041.4"/>
</dbReference>
<dbReference type="GeneID" id="23212"/>
<dbReference type="KEGG" id="hsa:23212"/>
<dbReference type="MANE-Select" id="ENST00000320270.4">
    <property type="protein sequence ID" value="ENSP00000322396.2"/>
    <property type="RefSeq nucleotide sequence ID" value="NM_015169.4"/>
    <property type="RefSeq protein sequence ID" value="NP_055984.1"/>
</dbReference>
<dbReference type="UCSC" id="uc003xwa.3">
    <property type="organism name" value="human"/>
</dbReference>
<dbReference type="AGR" id="HGNC:17083"/>
<dbReference type="CTD" id="23212"/>
<dbReference type="DisGeNET" id="23212"/>
<dbReference type="GeneCards" id="RRS1"/>
<dbReference type="HGNC" id="HGNC:17083">
    <property type="gene designation" value="RRS1"/>
</dbReference>
<dbReference type="HPA" id="ENSG00000179041">
    <property type="expression patterns" value="Low tissue specificity"/>
</dbReference>
<dbReference type="MIM" id="618311">
    <property type="type" value="gene"/>
</dbReference>
<dbReference type="neXtProt" id="NX_Q15050"/>
<dbReference type="OpenTargets" id="ENSG00000179041"/>
<dbReference type="PharmGKB" id="PA134993138"/>
<dbReference type="VEuPathDB" id="HostDB:ENSG00000179041"/>
<dbReference type="eggNOG" id="KOG1765">
    <property type="taxonomic scope" value="Eukaryota"/>
</dbReference>
<dbReference type="GeneTree" id="ENSGT00390000005213"/>
<dbReference type="HOGENOM" id="CLU_065163_1_0_1"/>
<dbReference type="InParanoid" id="Q15050"/>
<dbReference type="OMA" id="ACDKNRI"/>
<dbReference type="OrthoDB" id="28455at2759"/>
<dbReference type="PAN-GO" id="Q15050">
    <property type="GO annotations" value="5 GO annotations based on evolutionary models"/>
</dbReference>
<dbReference type="PhylomeDB" id="Q15050"/>
<dbReference type="TreeFam" id="TF313067"/>
<dbReference type="PathwayCommons" id="Q15050"/>
<dbReference type="SignaLink" id="Q15050"/>
<dbReference type="BioGRID-ORCS" id="23212">
    <property type="hits" value="784 hits in 1158 CRISPR screens"/>
</dbReference>
<dbReference type="CD-CODE" id="91857CE7">
    <property type="entry name" value="Nucleolus"/>
</dbReference>
<dbReference type="GeneWiki" id="RRS1"/>
<dbReference type="GenomeRNAi" id="23212"/>
<dbReference type="Pharos" id="Q15050">
    <property type="development level" value="Tbio"/>
</dbReference>
<dbReference type="PRO" id="PR:Q15050"/>
<dbReference type="Proteomes" id="UP000005640">
    <property type="component" value="Chromosome 8"/>
</dbReference>
<dbReference type="RNAct" id="Q15050">
    <property type="molecule type" value="protein"/>
</dbReference>
<dbReference type="Bgee" id="ENSG00000179041">
    <property type="expression patterns" value="Expressed in gastrocnemius and 115 other cell types or tissues"/>
</dbReference>
<dbReference type="GO" id="GO:0000794">
    <property type="term" value="C:condensed nuclear chromosome"/>
    <property type="evidence" value="ECO:0000314"/>
    <property type="project" value="UniProtKB"/>
</dbReference>
<dbReference type="GO" id="GO:0005783">
    <property type="term" value="C:endoplasmic reticulum"/>
    <property type="evidence" value="ECO:0007669"/>
    <property type="project" value="Ensembl"/>
</dbReference>
<dbReference type="GO" id="GO:0005730">
    <property type="term" value="C:nucleolus"/>
    <property type="evidence" value="ECO:0000314"/>
    <property type="project" value="UniProtKB"/>
</dbReference>
<dbReference type="GO" id="GO:0005654">
    <property type="term" value="C:nucleoplasm"/>
    <property type="evidence" value="ECO:0000314"/>
    <property type="project" value="HPA"/>
</dbReference>
<dbReference type="GO" id="GO:0030687">
    <property type="term" value="C:preribosome, large subunit precursor"/>
    <property type="evidence" value="ECO:0000318"/>
    <property type="project" value="GO_Central"/>
</dbReference>
<dbReference type="GO" id="GO:0008097">
    <property type="term" value="F:5S rRNA binding"/>
    <property type="evidence" value="ECO:0000314"/>
    <property type="project" value="UniProtKB"/>
</dbReference>
<dbReference type="GO" id="GO:0003723">
    <property type="term" value="F:RNA binding"/>
    <property type="evidence" value="ECO:0007005"/>
    <property type="project" value="UniProtKB"/>
</dbReference>
<dbReference type="GO" id="GO:0000447">
    <property type="term" value="P:endonucleolytic cleavage in ITS1 to separate SSU-rRNA from 5.8S rRNA and LSU-rRNA from tricistronic rRNA transcript (SSU-rRNA, 5.8S rRNA, LSU-rRNA)"/>
    <property type="evidence" value="ECO:0000318"/>
    <property type="project" value="GO_Central"/>
</dbReference>
<dbReference type="GO" id="GO:0002244">
    <property type="term" value="P:hematopoietic progenitor cell differentiation"/>
    <property type="evidence" value="ECO:0007669"/>
    <property type="project" value="Ensembl"/>
</dbReference>
<dbReference type="GO" id="GO:0007080">
    <property type="term" value="P:mitotic metaphase chromosome alignment"/>
    <property type="evidence" value="ECO:0000315"/>
    <property type="project" value="UniProtKB"/>
</dbReference>
<dbReference type="GO" id="GO:1902570">
    <property type="term" value="P:protein localization to nucleolus"/>
    <property type="evidence" value="ECO:0000315"/>
    <property type="project" value="UniProtKB"/>
</dbReference>
<dbReference type="GO" id="GO:1901796">
    <property type="term" value="P:regulation of signal transduction by p53 class mediator"/>
    <property type="evidence" value="ECO:0000315"/>
    <property type="project" value="UniProtKB"/>
</dbReference>
<dbReference type="GO" id="GO:0000027">
    <property type="term" value="P:ribosomal large subunit assembly"/>
    <property type="evidence" value="ECO:0000315"/>
    <property type="project" value="UniProtKB"/>
</dbReference>
<dbReference type="GO" id="GO:0042273">
    <property type="term" value="P:ribosomal large subunit biogenesis"/>
    <property type="evidence" value="ECO:0000315"/>
    <property type="project" value="UniProtKB"/>
</dbReference>
<dbReference type="InterPro" id="IPR007023">
    <property type="entry name" value="Ribosom_reg"/>
</dbReference>
<dbReference type="PANTHER" id="PTHR17602">
    <property type="entry name" value="RIBOSOME BIOGENESIS REGULATORY PROTEIN"/>
    <property type="match status" value="1"/>
</dbReference>
<dbReference type="PANTHER" id="PTHR17602:SF4">
    <property type="entry name" value="RIBOSOME BIOGENESIS REGULATORY PROTEIN HOMOLOG"/>
    <property type="match status" value="1"/>
</dbReference>
<dbReference type="Pfam" id="PF04939">
    <property type="entry name" value="RRS1"/>
    <property type="match status" value="1"/>
</dbReference>
<organism>
    <name type="scientific">Homo sapiens</name>
    <name type="common">Human</name>
    <dbReference type="NCBI Taxonomy" id="9606"/>
    <lineage>
        <taxon>Eukaryota</taxon>
        <taxon>Metazoa</taxon>
        <taxon>Chordata</taxon>
        <taxon>Craniata</taxon>
        <taxon>Vertebrata</taxon>
        <taxon>Euteleostomi</taxon>
        <taxon>Mammalia</taxon>
        <taxon>Eutheria</taxon>
        <taxon>Euarchontoglires</taxon>
        <taxon>Primates</taxon>
        <taxon>Haplorrhini</taxon>
        <taxon>Catarrhini</taxon>
        <taxon>Hominidae</taxon>
        <taxon>Homo</taxon>
    </lineage>
</organism>
<comment type="function">
    <text evidence="4">Involved in ribosomal large subunit assembly. May regulate the localization of the 5S RNP/5S ribonucleoprotein particle to the nucleolus.</text>
</comment>
<comment type="subunit">
    <text evidence="5">Component of a hexameric 5S RNP precursor complex, composed of 5S RNA, RRS1, RPF2/BXDC1, RPL5, RPL11 and HEATR3; this complex acts as a precursor for ribosome assembly.</text>
</comment>
<comment type="interaction">
    <interactant intactId="EBI-749186">
        <id>Q15050</id>
    </interactant>
    <interactant intactId="EBI-743771">
        <id>Q92624</id>
        <label>APPBP2</label>
    </interactant>
    <organismsDiffer>false</organismsDiffer>
    <experiments>7</experiments>
</comment>
<comment type="interaction">
    <interactant intactId="EBI-749186">
        <id>Q15050</id>
    </interactant>
    <interactant intactId="EBI-1051960">
        <id>Q9H7B2</id>
        <label>RPF2</label>
    </interactant>
    <organismsDiffer>false</organismsDiffer>
    <experiments>3</experiments>
</comment>
<comment type="interaction">
    <interactant intactId="EBI-749186">
        <id>Q15050</id>
    </interactant>
    <interactant intactId="EBI-727004">
        <id>O00560</id>
        <label>SDCBP</label>
    </interactant>
    <organismsDiffer>false</organismsDiffer>
    <experiments>3</experiments>
</comment>
<comment type="subcellular location">
    <subcellularLocation>
        <location evidence="3 6">Nucleus</location>
        <location evidence="3 6">Nucleolus</location>
    </subcellularLocation>
</comment>
<comment type="PTM">
    <text evidence="1">Citrullinated by PADI4.</text>
</comment>
<comment type="similarity">
    <text evidence="7">Belongs to the RRS1 family.</text>
</comment>
<comment type="sequence caution" evidence="7">
    <conflict type="erroneous initiation">
        <sequence resource="EMBL-CDS" id="BAA04948"/>
    </conflict>
</comment>
<name>RRS1_HUMAN</name>
<sequence>MEGQSVEELLAKAEQDEAEKLQRITVHKELELQFDLGNLLASDRNPPTGLRCAGPTPEAELQALARDNTQLLINQLWQLPTERVEEAIVARLPEPTTRLPREKPLPRPRPLTRWQQFARLKGIRPKKKTNLVWDEVSGQWRRRWGYQRARDDTKEWLIEVPGNADPLEDQFAKRIQAKKERVAKNELNRLRNLARAHKMQLPSAAGLHPTGHQSKEELGRAMQVAKVSTASVGRFQERLPKEKVPRGSGKKRKFQPLFGDFAAEKKNQLELLRVMNSKKPQLDVTRATNKQMREEDQEEAAKRRKMSQKGKRKGGRQGPGGKRKGGPPSQGGKRKGGLGGKMNSGPPGLGGKRKGGQRPGGKRRK</sequence>
<protein>
    <recommendedName>
        <fullName>Ribosome biogenesis regulatory protein homolog</fullName>
    </recommendedName>
</protein>
<keyword id="KW-0002">3D-structure</keyword>
<keyword id="KW-0007">Acetylation</keyword>
<keyword id="KW-0164">Citrullination</keyword>
<keyword id="KW-0903">Direct protein sequencing</keyword>
<keyword id="KW-1017">Isopeptide bond</keyword>
<keyword id="KW-0539">Nucleus</keyword>
<keyword id="KW-0597">Phosphoprotein</keyword>
<keyword id="KW-1267">Proteomics identification</keyword>
<keyword id="KW-1185">Reference proteome</keyword>
<keyword id="KW-0690">Ribosome biogenesis</keyword>
<keyword id="KW-0832">Ubl conjugation</keyword>
<reference key="1">
    <citation type="journal article" date="1995" name="DNA Res.">
        <title>Prediction of the coding sequences of unidentified human genes. III. The coding sequences of 40 new genes (KIAA0081-KIAA0120) deduced by analysis of cDNA clones from human cell line KG-1.</title>
        <authorList>
            <person name="Nagase T."/>
            <person name="Miyajima N."/>
            <person name="Tanaka A."/>
            <person name="Sazuka T."/>
            <person name="Seki N."/>
            <person name="Sato S."/>
            <person name="Tabata S."/>
            <person name="Ishikawa K."/>
            <person name="Kawarabayasi Y."/>
            <person name="Kotani H."/>
            <person name="Nomura N."/>
        </authorList>
    </citation>
    <scope>NUCLEOTIDE SEQUENCE [LARGE SCALE MRNA]</scope>
    <source>
        <tissue>Bone marrow</tissue>
    </source>
</reference>
<reference key="2">
    <citation type="journal article" date="2004" name="Genome Res.">
        <title>The status, quality, and expansion of the NIH full-length cDNA project: the Mammalian Gene Collection (MGC).</title>
        <authorList>
            <consortium name="The MGC Project Team"/>
        </authorList>
    </citation>
    <scope>NUCLEOTIDE SEQUENCE [LARGE SCALE MRNA]</scope>
    <source>
        <tissue>Lung</tissue>
        <tissue>Uterus</tissue>
    </source>
</reference>
<reference key="3">
    <citation type="submission" date="2005-08" db="UniProtKB">
        <authorList>
            <person name="Bienvenut W.V."/>
        </authorList>
    </citation>
    <scope>PROTEIN SEQUENCE OF 1-12; 92-98; 129-141; 254-265; 267-273 AND 342-352</scope>
    <scope>ACETYLATION AT MET-1</scope>
    <scope>SUBCELLULAR LOCATION</scope>
    <scope>IDENTIFICATION BY MASS SPECTROMETRY</scope>
    <source>
        <tissue>Cervix carcinoma</tissue>
    </source>
</reference>
<reference key="4">
    <citation type="journal article" date="2002" name="Mol. Biol. Cell">
        <title>Functional proteomic analysis of human nucleolus.</title>
        <authorList>
            <person name="Scherl A."/>
            <person name="Coute Y."/>
            <person name="Deon C."/>
            <person name="Calle A."/>
            <person name="Kindbeiter K."/>
            <person name="Sanchez J.-C."/>
            <person name="Greco A."/>
            <person name="Hochstrasser D.F."/>
            <person name="Diaz J.-J."/>
        </authorList>
    </citation>
    <scope>SUBCELLULAR LOCATION [LARGE SCALE ANALYSIS]</scope>
    <source>
        <tissue>Cervix carcinoma</tissue>
    </source>
</reference>
<reference key="5">
    <citation type="journal article" date="2009" name="Anal. Chem.">
        <title>Lys-N and trypsin cover complementary parts of the phosphoproteome in a refined SCX-based approach.</title>
        <authorList>
            <person name="Gauci S."/>
            <person name="Helbig A.O."/>
            <person name="Slijper M."/>
            <person name="Krijgsveld J."/>
            <person name="Heck A.J."/>
            <person name="Mohammed S."/>
        </authorList>
    </citation>
    <scope>ACETYLATION [LARGE SCALE ANALYSIS] AT MET-1</scope>
    <scope>IDENTIFICATION BY MASS SPECTROMETRY [LARGE SCALE ANALYSIS]</scope>
</reference>
<reference key="6">
    <citation type="journal article" date="2012" name="Mol. Cell. Proteomics">
        <title>Comparative large-scale characterisation of plant vs. mammal proteins reveals similar and idiosyncratic N-alpha acetylation features.</title>
        <authorList>
            <person name="Bienvenut W.V."/>
            <person name="Sumpton D."/>
            <person name="Martinez A."/>
            <person name="Lilla S."/>
            <person name="Espagne C."/>
            <person name="Meinnel T."/>
            <person name="Giglione C."/>
        </authorList>
    </citation>
    <scope>ACETYLATION [LARGE SCALE ANALYSIS] AT MET-1</scope>
    <scope>IDENTIFICATION BY MASS SPECTROMETRY [LARGE SCALE ANALYSIS]</scope>
</reference>
<reference key="7">
    <citation type="journal article" date="2012" name="Proc. Natl. Acad. Sci. U.S.A.">
        <title>N-terminal acetylome analyses and functional insights of the N-terminal acetyltransferase NatB.</title>
        <authorList>
            <person name="Van Damme P."/>
            <person name="Lasa M."/>
            <person name="Polevoda B."/>
            <person name="Gazquez C."/>
            <person name="Elosegui-Artola A."/>
            <person name="Kim D.S."/>
            <person name="De Juan-Pardo E."/>
            <person name="Demeyer K."/>
            <person name="Hole K."/>
            <person name="Larrea E."/>
            <person name="Timmerman E."/>
            <person name="Prieto J."/>
            <person name="Arnesen T."/>
            <person name="Sherman F."/>
            <person name="Gevaert K."/>
            <person name="Aldabe R."/>
        </authorList>
    </citation>
    <scope>ACETYLATION [LARGE SCALE ANALYSIS] AT MET-1</scope>
    <scope>IDENTIFICATION BY MASS SPECTROMETRY [LARGE SCALE ANALYSIS]</scope>
</reference>
<reference key="8">
    <citation type="journal article" date="2013" name="Cell Rep.">
        <title>The 5S RNP couples p53 homeostasis to ribosome biogenesis and nucleolar stress.</title>
        <authorList>
            <person name="Sloan K.E."/>
            <person name="Bohnsack M.T."/>
            <person name="Watkins N.J."/>
        </authorList>
    </citation>
    <scope>FUNCTION</scope>
</reference>
<reference key="9">
    <citation type="journal article" date="2013" name="J. Proteome Res.">
        <title>Toward a comprehensive characterization of a human cancer cell phosphoproteome.</title>
        <authorList>
            <person name="Zhou H."/>
            <person name="Di Palma S."/>
            <person name="Preisinger C."/>
            <person name="Peng M."/>
            <person name="Polat A.N."/>
            <person name="Heck A.J."/>
            <person name="Mohammed S."/>
        </authorList>
    </citation>
    <scope>PHOSPHORYLATION [LARGE SCALE ANALYSIS] AT SER-5</scope>
    <scope>IDENTIFICATION BY MASS SPECTROMETRY [LARGE SCALE ANALYSIS]</scope>
    <source>
        <tissue>Cervix carcinoma</tissue>
        <tissue>Erythroleukemia</tissue>
    </source>
</reference>
<reference key="10">
    <citation type="journal article" date="2017" name="Nat. Struct. Mol. Biol.">
        <title>Site-specific mapping of the human SUMO proteome reveals co-modification with phosphorylation.</title>
        <authorList>
            <person name="Hendriks I.A."/>
            <person name="Lyon D."/>
            <person name="Young C."/>
            <person name="Jensen L.J."/>
            <person name="Vertegaal A.C."/>
            <person name="Nielsen M.L."/>
        </authorList>
    </citation>
    <scope>SUMOYLATION [LARGE SCALE ANALYSIS] AT LYS-154; LYS-226 AND LYS-266</scope>
    <scope>IDENTIFICATION BY MASS SPECTROMETRY [LARGE SCALE ANALYSIS]</scope>
</reference>
<reference key="11">
    <citation type="journal article" date="2023" name="Nat. Struct. Mol. Biol.">
        <title>Structure of nascent 5S RNPs at the crossroad between ribosome assembly and MDM2-p53 pathways.</title>
        <authorList>
            <person name="Castillo Duque de Estrada N.M."/>
            <person name="Thoms M."/>
            <person name="Flemming D."/>
            <person name="Hammaren H.M."/>
            <person name="Buschauer R."/>
            <person name="Ameismeier M."/>
            <person name="Bassler J."/>
            <person name="Beck M."/>
            <person name="Beckmann R."/>
            <person name="Hurt E."/>
        </authorList>
    </citation>
    <scope>SUBUNIT</scope>
</reference>